<sequence length="200" mass="21049">MTRLILATRNAGKITELRAILADAGLTHDLVGADAYPDIPDVKETGVTFAENALLKAHALARATGLPAVADDSGLCVDVLGGAPGIFSARWSGRHGDDRANLDLLLAQLSDISEAHRGAHFACAAALALPDGTERVVEGQLRGTLRHTPTGTNGFGYDPVLQPEGETRTCAELSAEEKNAISHRGKAFRELVPVVRELLG</sequence>
<proteinExistence type="inferred from homology"/>
<name>IXTPA_STRAW</name>
<organism>
    <name type="scientific">Streptomyces avermitilis (strain ATCC 31267 / DSM 46492 / JCM 5070 / NBRC 14893 / NCIMB 12804 / NRRL 8165 / MA-4680)</name>
    <dbReference type="NCBI Taxonomy" id="227882"/>
    <lineage>
        <taxon>Bacteria</taxon>
        <taxon>Bacillati</taxon>
        <taxon>Actinomycetota</taxon>
        <taxon>Actinomycetes</taxon>
        <taxon>Kitasatosporales</taxon>
        <taxon>Streptomycetaceae</taxon>
        <taxon>Streptomyces</taxon>
    </lineage>
</organism>
<evidence type="ECO:0000255" key="1">
    <source>
        <dbReference type="HAMAP-Rule" id="MF_01405"/>
    </source>
</evidence>
<comment type="function">
    <text evidence="1">Pyrophosphatase that catalyzes the hydrolysis of nucleoside triphosphates to their monophosphate derivatives, with a high preference for the non-canonical purine nucleotides XTP (xanthosine triphosphate), dITP (deoxyinosine triphosphate) and ITP. Seems to function as a house-cleaning enzyme that removes non-canonical purine nucleotides from the nucleotide pool, thus preventing their incorporation into DNA/RNA and avoiding chromosomal lesions.</text>
</comment>
<comment type="catalytic activity">
    <reaction evidence="1">
        <text>XTP + H2O = XMP + diphosphate + H(+)</text>
        <dbReference type="Rhea" id="RHEA:28610"/>
        <dbReference type="ChEBI" id="CHEBI:15377"/>
        <dbReference type="ChEBI" id="CHEBI:15378"/>
        <dbReference type="ChEBI" id="CHEBI:33019"/>
        <dbReference type="ChEBI" id="CHEBI:57464"/>
        <dbReference type="ChEBI" id="CHEBI:61314"/>
        <dbReference type="EC" id="3.6.1.66"/>
    </reaction>
</comment>
<comment type="catalytic activity">
    <reaction evidence="1">
        <text>dITP + H2O = dIMP + diphosphate + H(+)</text>
        <dbReference type="Rhea" id="RHEA:28342"/>
        <dbReference type="ChEBI" id="CHEBI:15377"/>
        <dbReference type="ChEBI" id="CHEBI:15378"/>
        <dbReference type="ChEBI" id="CHEBI:33019"/>
        <dbReference type="ChEBI" id="CHEBI:61194"/>
        <dbReference type="ChEBI" id="CHEBI:61382"/>
        <dbReference type="EC" id="3.6.1.66"/>
    </reaction>
</comment>
<comment type="catalytic activity">
    <reaction evidence="1">
        <text>ITP + H2O = IMP + diphosphate + H(+)</text>
        <dbReference type="Rhea" id="RHEA:29399"/>
        <dbReference type="ChEBI" id="CHEBI:15377"/>
        <dbReference type="ChEBI" id="CHEBI:15378"/>
        <dbReference type="ChEBI" id="CHEBI:33019"/>
        <dbReference type="ChEBI" id="CHEBI:58053"/>
        <dbReference type="ChEBI" id="CHEBI:61402"/>
        <dbReference type="EC" id="3.6.1.66"/>
    </reaction>
</comment>
<comment type="cofactor">
    <cofactor evidence="1">
        <name>Mg(2+)</name>
        <dbReference type="ChEBI" id="CHEBI:18420"/>
    </cofactor>
    <text evidence="1">Binds 1 Mg(2+) ion per subunit.</text>
</comment>
<comment type="subunit">
    <text evidence="1">Homodimer.</text>
</comment>
<comment type="similarity">
    <text evidence="1">Belongs to the HAM1 NTPase family.</text>
</comment>
<protein>
    <recommendedName>
        <fullName evidence="1">dITP/XTP pyrophosphatase</fullName>
        <ecNumber evidence="1">3.6.1.66</ecNumber>
    </recommendedName>
    <alternativeName>
        <fullName evidence="1">Non-canonical purine NTP pyrophosphatase</fullName>
    </alternativeName>
    <alternativeName>
        <fullName evidence="1">Non-standard purine NTP pyrophosphatase</fullName>
    </alternativeName>
    <alternativeName>
        <fullName evidence="1">Nucleoside-triphosphate diphosphatase</fullName>
    </alternativeName>
    <alternativeName>
        <fullName evidence="1">Nucleoside-triphosphate pyrophosphatase</fullName>
        <shortName evidence="1">NTPase</shortName>
    </alternativeName>
</protein>
<gene>
    <name type="ordered locus">SAV_5172</name>
</gene>
<keyword id="KW-0378">Hydrolase</keyword>
<keyword id="KW-0460">Magnesium</keyword>
<keyword id="KW-0479">Metal-binding</keyword>
<keyword id="KW-0546">Nucleotide metabolism</keyword>
<keyword id="KW-0547">Nucleotide-binding</keyword>
<keyword id="KW-1185">Reference proteome</keyword>
<reference key="1">
    <citation type="journal article" date="2001" name="Proc. Natl. Acad. Sci. U.S.A.">
        <title>Genome sequence of an industrial microorganism Streptomyces avermitilis: deducing the ability of producing secondary metabolites.</title>
        <authorList>
            <person name="Omura S."/>
            <person name="Ikeda H."/>
            <person name="Ishikawa J."/>
            <person name="Hanamoto A."/>
            <person name="Takahashi C."/>
            <person name="Shinose M."/>
            <person name="Takahashi Y."/>
            <person name="Horikawa H."/>
            <person name="Nakazawa H."/>
            <person name="Osonoe T."/>
            <person name="Kikuchi H."/>
            <person name="Shiba T."/>
            <person name="Sakaki Y."/>
            <person name="Hattori M."/>
        </authorList>
    </citation>
    <scope>NUCLEOTIDE SEQUENCE [LARGE SCALE GENOMIC DNA]</scope>
    <source>
        <strain>ATCC 31267 / DSM 46492 / JCM 5070 / NBRC 14893 / NCIMB 12804 / NRRL 8165 / MA-4680</strain>
    </source>
</reference>
<reference key="2">
    <citation type="journal article" date="2003" name="Nat. Biotechnol.">
        <title>Complete genome sequence and comparative analysis of the industrial microorganism Streptomyces avermitilis.</title>
        <authorList>
            <person name="Ikeda H."/>
            <person name="Ishikawa J."/>
            <person name="Hanamoto A."/>
            <person name="Shinose M."/>
            <person name="Kikuchi H."/>
            <person name="Shiba T."/>
            <person name="Sakaki Y."/>
            <person name="Hattori M."/>
            <person name="Omura S."/>
        </authorList>
    </citation>
    <scope>NUCLEOTIDE SEQUENCE [LARGE SCALE GENOMIC DNA]</scope>
    <source>
        <strain>ATCC 31267 / DSM 46492 / JCM 5070 / NBRC 14893 / NCIMB 12804 / NRRL 8165 / MA-4680</strain>
    </source>
</reference>
<accession>Q82D15</accession>
<dbReference type="EC" id="3.6.1.66" evidence="1"/>
<dbReference type="EMBL" id="BA000030">
    <property type="protein sequence ID" value="BAC72884.1"/>
    <property type="molecule type" value="Genomic_DNA"/>
</dbReference>
<dbReference type="SMR" id="Q82D15"/>
<dbReference type="GeneID" id="41542258"/>
<dbReference type="KEGG" id="sma:SAVERM_5172"/>
<dbReference type="eggNOG" id="COG0127">
    <property type="taxonomic scope" value="Bacteria"/>
</dbReference>
<dbReference type="HOGENOM" id="CLU_082080_0_1_11"/>
<dbReference type="OrthoDB" id="9807456at2"/>
<dbReference type="Proteomes" id="UP000000428">
    <property type="component" value="Chromosome"/>
</dbReference>
<dbReference type="GO" id="GO:0005829">
    <property type="term" value="C:cytosol"/>
    <property type="evidence" value="ECO:0007669"/>
    <property type="project" value="TreeGrafter"/>
</dbReference>
<dbReference type="GO" id="GO:0035870">
    <property type="term" value="F:dITP diphosphatase activity"/>
    <property type="evidence" value="ECO:0007669"/>
    <property type="project" value="RHEA"/>
</dbReference>
<dbReference type="GO" id="GO:0036220">
    <property type="term" value="F:ITP diphosphatase activity"/>
    <property type="evidence" value="ECO:0007669"/>
    <property type="project" value="UniProtKB-EC"/>
</dbReference>
<dbReference type="GO" id="GO:0046872">
    <property type="term" value="F:metal ion binding"/>
    <property type="evidence" value="ECO:0007669"/>
    <property type="project" value="UniProtKB-KW"/>
</dbReference>
<dbReference type="GO" id="GO:0000166">
    <property type="term" value="F:nucleotide binding"/>
    <property type="evidence" value="ECO:0007669"/>
    <property type="project" value="UniProtKB-KW"/>
</dbReference>
<dbReference type="GO" id="GO:0017111">
    <property type="term" value="F:ribonucleoside triphosphate phosphatase activity"/>
    <property type="evidence" value="ECO:0007669"/>
    <property type="project" value="InterPro"/>
</dbReference>
<dbReference type="GO" id="GO:0036222">
    <property type="term" value="F:XTP diphosphatase activity"/>
    <property type="evidence" value="ECO:0007669"/>
    <property type="project" value="RHEA"/>
</dbReference>
<dbReference type="GO" id="GO:0009117">
    <property type="term" value="P:nucleotide metabolic process"/>
    <property type="evidence" value="ECO:0007669"/>
    <property type="project" value="UniProtKB-KW"/>
</dbReference>
<dbReference type="GO" id="GO:0009146">
    <property type="term" value="P:purine nucleoside triphosphate catabolic process"/>
    <property type="evidence" value="ECO:0007669"/>
    <property type="project" value="UniProtKB-UniRule"/>
</dbReference>
<dbReference type="CDD" id="cd00515">
    <property type="entry name" value="HAM1"/>
    <property type="match status" value="1"/>
</dbReference>
<dbReference type="FunFam" id="3.90.950.10:FF:000001">
    <property type="entry name" value="dITP/XTP pyrophosphatase"/>
    <property type="match status" value="1"/>
</dbReference>
<dbReference type="Gene3D" id="3.90.950.10">
    <property type="match status" value="1"/>
</dbReference>
<dbReference type="HAMAP" id="MF_01405">
    <property type="entry name" value="Non_canon_purine_NTPase"/>
    <property type="match status" value="1"/>
</dbReference>
<dbReference type="InterPro" id="IPR020922">
    <property type="entry name" value="dITP/XTP_pyrophosphatase"/>
</dbReference>
<dbReference type="InterPro" id="IPR029001">
    <property type="entry name" value="ITPase-like_fam"/>
</dbReference>
<dbReference type="InterPro" id="IPR002637">
    <property type="entry name" value="RdgB/HAM1"/>
</dbReference>
<dbReference type="NCBIfam" id="TIGR00042">
    <property type="entry name" value="RdgB/HAM1 family non-canonical purine NTP pyrophosphatase"/>
    <property type="match status" value="1"/>
</dbReference>
<dbReference type="PANTHER" id="PTHR11067:SF9">
    <property type="entry name" value="INOSINE TRIPHOSPHATE PYROPHOSPHATASE"/>
    <property type="match status" value="1"/>
</dbReference>
<dbReference type="PANTHER" id="PTHR11067">
    <property type="entry name" value="INOSINE TRIPHOSPHATE PYROPHOSPHATASE/HAM1 PROTEIN"/>
    <property type="match status" value="1"/>
</dbReference>
<dbReference type="Pfam" id="PF01725">
    <property type="entry name" value="Ham1p_like"/>
    <property type="match status" value="1"/>
</dbReference>
<dbReference type="SUPFAM" id="SSF52972">
    <property type="entry name" value="ITPase-like"/>
    <property type="match status" value="1"/>
</dbReference>
<feature type="chain" id="PRO_0000178237" description="dITP/XTP pyrophosphatase">
    <location>
        <begin position="1"/>
        <end position="200"/>
    </location>
</feature>
<feature type="active site" description="Proton acceptor" evidence="1">
    <location>
        <position position="72"/>
    </location>
</feature>
<feature type="binding site" evidence="1">
    <location>
        <begin position="8"/>
        <end position="13"/>
    </location>
    <ligand>
        <name>substrate</name>
    </ligand>
</feature>
<feature type="binding site" evidence="1">
    <location>
        <position position="72"/>
    </location>
    <ligand>
        <name>Mg(2+)</name>
        <dbReference type="ChEBI" id="CHEBI:18420"/>
    </ligand>
</feature>
<feature type="binding site" evidence="1">
    <location>
        <position position="73"/>
    </location>
    <ligand>
        <name>substrate</name>
    </ligand>
</feature>
<feature type="binding site" evidence="1">
    <location>
        <begin position="155"/>
        <end position="158"/>
    </location>
    <ligand>
        <name>substrate</name>
    </ligand>
</feature>
<feature type="binding site" evidence="1">
    <location>
        <position position="178"/>
    </location>
    <ligand>
        <name>substrate</name>
    </ligand>
</feature>
<feature type="binding site" evidence="1">
    <location>
        <begin position="183"/>
        <end position="184"/>
    </location>
    <ligand>
        <name>substrate</name>
    </ligand>
</feature>